<reference key="1">
    <citation type="journal article" date="1997" name="Microbiology">
        <title>Sequence of the Bacillus subtilis genome region in the vicinity of the lev operon reveals two new extracytoplasmic function RNA polymerase sigma factors SigV and SigZ.</title>
        <authorList>
            <person name="Sorokin A."/>
            <person name="Bolotin A."/>
            <person name="Purnelle B."/>
            <person name="Hilbert H."/>
            <person name="Lauber J."/>
            <person name="Duesterhoeft A."/>
            <person name="Ehrlich S.D."/>
        </authorList>
    </citation>
    <scope>NUCLEOTIDE SEQUENCE [GENOMIC DNA]</scope>
    <source>
        <strain>168</strain>
    </source>
</reference>
<reference key="2">
    <citation type="journal article" date="1997" name="Nature">
        <title>The complete genome sequence of the Gram-positive bacterium Bacillus subtilis.</title>
        <authorList>
            <person name="Kunst F."/>
            <person name="Ogasawara N."/>
            <person name="Moszer I."/>
            <person name="Albertini A.M."/>
            <person name="Alloni G."/>
            <person name="Azevedo V."/>
            <person name="Bertero M.G."/>
            <person name="Bessieres P."/>
            <person name="Bolotin A."/>
            <person name="Borchert S."/>
            <person name="Borriss R."/>
            <person name="Boursier L."/>
            <person name="Brans A."/>
            <person name="Braun M."/>
            <person name="Brignell S.C."/>
            <person name="Bron S."/>
            <person name="Brouillet S."/>
            <person name="Bruschi C.V."/>
            <person name="Caldwell B."/>
            <person name="Capuano V."/>
            <person name="Carter N.M."/>
            <person name="Choi S.-K."/>
            <person name="Codani J.-J."/>
            <person name="Connerton I.F."/>
            <person name="Cummings N.J."/>
            <person name="Daniel R.A."/>
            <person name="Denizot F."/>
            <person name="Devine K.M."/>
            <person name="Duesterhoeft A."/>
            <person name="Ehrlich S.D."/>
            <person name="Emmerson P.T."/>
            <person name="Entian K.-D."/>
            <person name="Errington J."/>
            <person name="Fabret C."/>
            <person name="Ferrari E."/>
            <person name="Foulger D."/>
            <person name="Fritz C."/>
            <person name="Fujita M."/>
            <person name="Fujita Y."/>
            <person name="Fuma S."/>
            <person name="Galizzi A."/>
            <person name="Galleron N."/>
            <person name="Ghim S.-Y."/>
            <person name="Glaser P."/>
            <person name="Goffeau A."/>
            <person name="Golightly E.J."/>
            <person name="Grandi G."/>
            <person name="Guiseppi G."/>
            <person name="Guy B.J."/>
            <person name="Haga K."/>
            <person name="Haiech J."/>
            <person name="Harwood C.R."/>
            <person name="Henaut A."/>
            <person name="Hilbert H."/>
            <person name="Holsappel S."/>
            <person name="Hosono S."/>
            <person name="Hullo M.-F."/>
            <person name="Itaya M."/>
            <person name="Jones L.-M."/>
            <person name="Joris B."/>
            <person name="Karamata D."/>
            <person name="Kasahara Y."/>
            <person name="Klaerr-Blanchard M."/>
            <person name="Klein C."/>
            <person name="Kobayashi Y."/>
            <person name="Koetter P."/>
            <person name="Koningstein G."/>
            <person name="Krogh S."/>
            <person name="Kumano M."/>
            <person name="Kurita K."/>
            <person name="Lapidus A."/>
            <person name="Lardinois S."/>
            <person name="Lauber J."/>
            <person name="Lazarevic V."/>
            <person name="Lee S.-M."/>
            <person name="Levine A."/>
            <person name="Liu H."/>
            <person name="Masuda S."/>
            <person name="Mauel C."/>
            <person name="Medigue C."/>
            <person name="Medina N."/>
            <person name="Mellado R.P."/>
            <person name="Mizuno M."/>
            <person name="Moestl D."/>
            <person name="Nakai S."/>
            <person name="Noback M."/>
            <person name="Noone D."/>
            <person name="O'Reilly M."/>
            <person name="Ogawa K."/>
            <person name="Ogiwara A."/>
            <person name="Oudega B."/>
            <person name="Park S.-H."/>
            <person name="Parro V."/>
            <person name="Pohl T.M."/>
            <person name="Portetelle D."/>
            <person name="Porwollik S."/>
            <person name="Prescott A.M."/>
            <person name="Presecan E."/>
            <person name="Pujic P."/>
            <person name="Purnelle B."/>
            <person name="Rapoport G."/>
            <person name="Rey M."/>
            <person name="Reynolds S."/>
            <person name="Rieger M."/>
            <person name="Rivolta C."/>
            <person name="Rocha E."/>
            <person name="Roche B."/>
            <person name="Rose M."/>
            <person name="Sadaie Y."/>
            <person name="Sato T."/>
            <person name="Scanlan E."/>
            <person name="Schleich S."/>
            <person name="Schroeter R."/>
            <person name="Scoffone F."/>
            <person name="Sekiguchi J."/>
            <person name="Sekowska A."/>
            <person name="Seror S.J."/>
            <person name="Serror P."/>
            <person name="Shin B.-S."/>
            <person name="Soldo B."/>
            <person name="Sorokin A."/>
            <person name="Tacconi E."/>
            <person name="Takagi T."/>
            <person name="Takahashi H."/>
            <person name="Takemaru K."/>
            <person name="Takeuchi M."/>
            <person name="Tamakoshi A."/>
            <person name="Tanaka T."/>
            <person name="Terpstra P."/>
            <person name="Tognoni A."/>
            <person name="Tosato V."/>
            <person name="Uchiyama S."/>
            <person name="Vandenbol M."/>
            <person name="Vannier F."/>
            <person name="Vassarotti A."/>
            <person name="Viari A."/>
            <person name="Wambutt R."/>
            <person name="Wedler E."/>
            <person name="Wedler H."/>
            <person name="Weitzenegger T."/>
            <person name="Winters P."/>
            <person name="Wipat A."/>
            <person name="Yamamoto H."/>
            <person name="Yamane K."/>
            <person name="Yasumoto K."/>
            <person name="Yata K."/>
            <person name="Yoshida K."/>
            <person name="Yoshikawa H.-F."/>
            <person name="Zumstein E."/>
            <person name="Yoshikawa H."/>
            <person name="Danchin A."/>
        </authorList>
    </citation>
    <scope>NUCLEOTIDE SEQUENCE [LARGE SCALE GENOMIC DNA]</scope>
    <source>
        <strain>168</strain>
    </source>
</reference>
<reference key="3">
    <citation type="journal article" date="2004" name="Microbiology">
        <title>Interaction of Bacillus subtilis extracytoplasmic function (ECF) sigma factors with the N-terminal regions of their potential anti-sigma factors.</title>
        <authorList>
            <person name="Yoshimura M."/>
            <person name="Asai K."/>
            <person name="Sadaie Y."/>
            <person name="Yoshikawa H."/>
        </authorList>
    </citation>
    <scope>INTERACTION WITH RSIV</scope>
    <source>
        <strain>168</strain>
    </source>
</reference>
<reference key="4">
    <citation type="journal article" date="2005" name="FEMS Microbiol. Lett.">
        <title>Identification of sigmaV-dependent genes of Bacillus subtilis.</title>
        <authorList>
            <person name="Zellmeier S."/>
            <person name="Hofmann C."/>
            <person name="Thomas S."/>
            <person name="Wiegert T."/>
            <person name="Schumann W."/>
        </authorList>
    </citation>
    <scope>FUNCTION</scope>
    <source>
        <strain>168 / Marburg / ATCC 6051 / DSM 10 / JCM 1465 / NBRC 13719 / NCIMB 3610 / NRRL NRS-744 / VKM B-501</strain>
    </source>
</reference>
<protein>
    <recommendedName>
        <fullName>RNA polymerase sigma factor SigV</fullName>
    </recommendedName>
</protein>
<organism>
    <name type="scientific">Bacillus subtilis (strain 168)</name>
    <dbReference type="NCBI Taxonomy" id="224308"/>
    <lineage>
        <taxon>Bacteria</taxon>
        <taxon>Bacillati</taxon>
        <taxon>Bacillota</taxon>
        <taxon>Bacilli</taxon>
        <taxon>Bacillales</taxon>
        <taxon>Bacillaceae</taxon>
        <taxon>Bacillus</taxon>
    </lineage>
</organism>
<dbReference type="EMBL" id="U93874">
    <property type="protein sequence ID" value="AAB80871.1"/>
    <property type="molecule type" value="Genomic_DNA"/>
</dbReference>
<dbReference type="EMBL" id="AL009126">
    <property type="protein sequence ID" value="CAB14654.1"/>
    <property type="molecule type" value="Genomic_DNA"/>
</dbReference>
<dbReference type="PIR" id="G69706">
    <property type="entry name" value="G69706"/>
</dbReference>
<dbReference type="RefSeq" id="NP_390590.1">
    <property type="nucleotide sequence ID" value="NC_000964.3"/>
</dbReference>
<dbReference type="RefSeq" id="WP_004398891.1">
    <property type="nucleotide sequence ID" value="NZ_OZ025638.1"/>
</dbReference>
<dbReference type="SMR" id="O05404"/>
<dbReference type="FunCoup" id="O05404">
    <property type="interactions" value="46"/>
</dbReference>
<dbReference type="IntAct" id="O05404">
    <property type="interactions" value="2"/>
</dbReference>
<dbReference type="STRING" id="224308.BSU27120"/>
<dbReference type="PaxDb" id="224308-BSU27120"/>
<dbReference type="DNASU" id="937591"/>
<dbReference type="EnsemblBacteria" id="CAB14654">
    <property type="protein sequence ID" value="CAB14654"/>
    <property type="gene ID" value="BSU_27120"/>
</dbReference>
<dbReference type="GeneID" id="937591"/>
<dbReference type="KEGG" id="bsu:BSU27120"/>
<dbReference type="PATRIC" id="fig|224308.179.peg.2945"/>
<dbReference type="eggNOG" id="COG1595">
    <property type="taxonomic scope" value="Bacteria"/>
</dbReference>
<dbReference type="InParanoid" id="O05404"/>
<dbReference type="OrthoDB" id="9782703at2"/>
<dbReference type="PhylomeDB" id="O05404"/>
<dbReference type="BioCyc" id="BSUB:BSU27120-MONOMER"/>
<dbReference type="Proteomes" id="UP000001570">
    <property type="component" value="Chromosome"/>
</dbReference>
<dbReference type="GO" id="GO:0003677">
    <property type="term" value="F:DNA binding"/>
    <property type="evidence" value="ECO:0007669"/>
    <property type="project" value="UniProtKB-KW"/>
</dbReference>
<dbReference type="GO" id="GO:0016987">
    <property type="term" value="F:sigma factor activity"/>
    <property type="evidence" value="ECO:0000318"/>
    <property type="project" value="GO_Central"/>
</dbReference>
<dbReference type="GO" id="GO:0006352">
    <property type="term" value="P:DNA-templated transcription initiation"/>
    <property type="evidence" value="ECO:0007669"/>
    <property type="project" value="InterPro"/>
</dbReference>
<dbReference type="GO" id="GO:0006355">
    <property type="term" value="P:regulation of DNA-templated transcription"/>
    <property type="evidence" value="ECO:0000318"/>
    <property type="project" value="GO_Central"/>
</dbReference>
<dbReference type="GO" id="GO:0006950">
    <property type="term" value="P:response to stress"/>
    <property type="evidence" value="ECO:0007669"/>
    <property type="project" value="UniProtKB-ARBA"/>
</dbReference>
<dbReference type="CDD" id="cd06171">
    <property type="entry name" value="Sigma70_r4"/>
    <property type="match status" value="1"/>
</dbReference>
<dbReference type="Gene3D" id="1.10.1740.10">
    <property type="match status" value="1"/>
</dbReference>
<dbReference type="Gene3D" id="1.10.10.10">
    <property type="entry name" value="Winged helix-like DNA-binding domain superfamily/Winged helix DNA-binding domain"/>
    <property type="match status" value="1"/>
</dbReference>
<dbReference type="InterPro" id="IPR039425">
    <property type="entry name" value="RNA_pol_sigma-70-like"/>
</dbReference>
<dbReference type="InterPro" id="IPR014284">
    <property type="entry name" value="RNA_pol_sigma-70_dom"/>
</dbReference>
<dbReference type="InterPro" id="IPR000838">
    <property type="entry name" value="RNA_pol_sigma70_ECF_CS"/>
</dbReference>
<dbReference type="InterPro" id="IPR007627">
    <property type="entry name" value="RNA_pol_sigma70_r2"/>
</dbReference>
<dbReference type="InterPro" id="IPR013249">
    <property type="entry name" value="RNA_pol_sigma70_r4_t2"/>
</dbReference>
<dbReference type="InterPro" id="IPR013325">
    <property type="entry name" value="RNA_pol_sigma_r2"/>
</dbReference>
<dbReference type="InterPro" id="IPR013324">
    <property type="entry name" value="RNA_pol_sigma_r3/r4-like"/>
</dbReference>
<dbReference type="InterPro" id="IPR036388">
    <property type="entry name" value="WH-like_DNA-bd_sf"/>
</dbReference>
<dbReference type="NCBIfam" id="TIGR02937">
    <property type="entry name" value="sigma70-ECF"/>
    <property type="match status" value="1"/>
</dbReference>
<dbReference type="PANTHER" id="PTHR43133">
    <property type="entry name" value="RNA POLYMERASE ECF-TYPE SIGMA FACTO"/>
    <property type="match status" value="1"/>
</dbReference>
<dbReference type="PANTHER" id="PTHR43133:SF60">
    <property type="entry name" value="RNA POLYMERASE SIGMA FACTOR SIGV"/>
    <property type="match status" value="1"/>
</dbReference>
<dbReference type="Pfam" id="PF04542">
    <property type="entry name" value="Sigma70_r2"/>
    <property type="match status" value="1"/>
</dbReference>
<dbReference type="Pfam" id="PF08281">
    <property type="entry name" value="Sigma70_r4_2"/>
    <property type="match status" value="1"/>
</dbReference>
<dbReference type="SUPFAM" id="SSF88946">
    <property type="entry name" value="Sigma2 domain of RNA polymerase sigma factors"/>
    <property type="match status" value="1"/>
</dbReference>
<dbReference type="SUPFAM" id="SSF88659">
    <property type="entry name" value="Sigma3 and sigma4 domains of RNA polymerase sigma factors"/>
    <property type="match status" value="1"/>
</dbReference>
<dbReference type="PROSITE" id="PS01063">
    <property type="entry name" value="SIGMA70_ECF"/>
    <property type="match status" value="1"/>
</dbReference>
<sequence>MKKKQTTKALLVTCITDHKQDFYRLAFSYVKNQDDALDIVQESIKKALSSVETVRNPETIKSWFYKILVRTAIDFLRKQKKIRVMDDETIEFLSKGKEDHYKDTDLHEALDELPYRYKTIIILRFFEDLKLEEIAEITGENTNTVKTRLYRALKLMRIQLTKEDLS</sequence>
<comment type="function">
    <text evidence="3">Sigma factors are initiation factors that promote the attachment of RNA polymerase to specific initiation sites and are then released. Positively regulates the expression of proteins involved in stress responses against bacitracin, paraquat and tellurite.</text>
</comment>
<comment type="subunit">
    <text evidence="2">Interacts with RsiV.</text>
</comment>
<comment type="similarity">
    <text evidence="4">Belongs to the sigma-70 factor family. ECF subfamily.</text>
</comment>
<evidence type="ECO:0000250" key="1"/>
<evidence type="ECO:0000269" key="2">
    <source>
    </source>
</evidence>
<evidence type="ECO:0000269" key="3">
    <source>
    </source>
</evidence>
<evidence type="ECO:0000305" key="4"/>
<feature type="chain" id="PRO_0000094015" description="RNA polymerase sigma factor SigV">
    <location>
        <begin position="1"/>
        <end position="166"/>
    </location>
</feature>
<feature type="DNA-binding region" description="H-T-H motif" evidence="1">
    <location>
        <begin position="131"/>
        <end position="150"/>
    </location>
</feature>
<feature type="short sequence motif" description="Polymerase core binding">
    <location>
        <begin position="38"/>
        <end position="51"/>
    </location>
</feature>
<name>SIGV_BACSU</name>
<proteinExistence type="evidence at protein level"/>
<accession>O05404</accession>
<keyword id="KW-0010">Activator</keyword>
<keyword id="KW-0238">DNA-binding</keyword>
<keyword id="KW-1185">Reference proteome</keyword>
<keyword id="KW-0731">Sigma factor</keyword>
<keyword id="KW-0804">Transcription</keyword>
<keyword id="KW-0805">Transcription regulation</keyword>
<gene>
    <name type="primary">sigV</name>
    <name type="ordered locus">BSU27120</name>
</gene>